<reference key="1">
    <citation type="submission" date="2000-10" db="EMBL/GenBank/DDBJ databases">
        <title>Earthworm cDNAs.</title>
        <authorList>
            <person name="Sturzenbaum S.R."/>
            <person name="Manova A."/>
            <person name="Morgan A.J."/>
            <person name="Kille P."/>
            <person name="Schaffner W."/>
            <person name="Georgiev O."/>
        </authorList>
    </citation>
    <scope>NUCLEOTIDE SEQUENCE [MRNA]</scope>
</reference>
<gene>
    <name type="primary">RPS23</name>
</gene>
<evidence type="ECO:0000250" key="1"/>
<evidence type="ECO:0000250" key="2">
    <source>
        <dbReference type="UniProtKB" id="P62266"/>
    </source>
</evidence>
<evidence type="ECO:0000250" key="3">
    <source>
        <dbReference type="UniProtKB" id="Q6SA96"/>
    </source>
</evidence>
<evidence type="ECO:0000256" key="4">
    <source>
        <dbReference type="SAM" id="MobiDB-lite"/>
    </source>
</evidence>
<evidence type="ECO:0000305" key="5"/>
<keyword id="KW-0963">Cytoplasm</keyword>
<keyword id="KW-0256">Endoplasmic reticulum</keyword>
<keyword id="KW-0379">Hydroxylation</keyword>
<keyword id="KW-0687">Ribonucleoprotein</keyword>
<keyword id="KW-0689">Ribosomal protein</keyword>
<dbReference type="EMBL" id="AJ291613">
    <property type="protein sequence ID" value="CAC14789.1"/>
    <property type="molecule type" value="mRNA"/>
</dbReference>
<dbReference type="SMR" id="Q9GRJ3"/>
<dbReference type="GO" id="GO:0022627">
    <property type="term" value="C:cytosolic small ribosomal subunit"/>
    <property type="evidence" value="ECO:0000250"/>
    <property type="project" value="UniProtKB"/>
</dbReference>
<dbReference type="GO" id="GO:0005791">
    <property type="term" value="C:rough endoplasmic reticulum"/>
    <property type="evidence" value="ECO:0007669"/>
    <property type="project" value="UniProtKB-SubCell"/>
</dbReference>
<dbReference type="GO" id="GO:0003735">
    <property type="term" value="F:structural constituent of ribosome"/>
    <property type="evidence" value="ECO:0007669"/>
    <property type="project" value="InterPro"/>
</dbReference>
<dbReference type="GO" id="GO:0002181">
    <property type="term" value="P:cytoplasmic translation"/>
    <property type="evidence" value="ECO:0000250"/>
    <property type="project" value="UniProtKB"/>
</dbReference>
<dbReference type="CDD" id="cd03367">
    <property type="entry name" value="Ribosomal_S23"/>
    <property type="match status" value="1"/>
</dbReference>
<dbReference type="FunFam" id="2.40.50.140:FF:000007">
    <property type="entry name" value="40S ribosomal protein S23"/>
    <property type="match status" value="1"/>
</dbReference>
<dbReference type="Gene3D" id="2.40.50.140">
    <property type="entry name" value="Nucleic acid-binding proteins"/>
    <property type="match status" value="1"/>
</dbReference>
<dbReference type="InterPro" id="IPR012340">
    <property type="entry name" value="NA-bd_OB-fold"/>
</dbReference>
<dbReference type="InterPro" id="IPR006032">
    <property type="entry name" value="Ribosomal_uS12"/>
</dbReference>
<dbReference type="InterPro" id="IPR005680">
    <property type="entry name" value="Ribosomal_uS12_euk/arc"/>
</dbReference>
<dbReference type="NCBIfam" id="NF003254">
    <property type="entry name" value="PRK04211.1"/>
    <property type="match status" value="1"/>
</dbReference>
<dbReference type="NCBIfam" id="TIGR00982">
    <property type="entry name" value="uS12_E_A"/>
    <property type="match status" value="1"/>
</dbReference>
<dbReference type="PANTHER" id="PTHR11652">
    <property type="entry name" value="30S RIBOSOMAL PROTEIN S12 FAMILY MEMBER"/>
    <property type="match status" value="1"/>
</dbReference>
<dbReference type="Pfam" id="PF00164">
    <property type="entry name" value="Ribosom_S12_S23"/>
    <property type="match status" value="1"/>
</dbReference>
<dbReference type="PIRSF" id="PIRSF002133">
    <property type="entry name" value="Ribosomal_S12/S23"/>
    <property type="match status" value="1"/>
</dbReference>
<dbReference type="SUPFAM" id="SSF50249">
    <property type="entry name" value="Nucleic acid-binding proteins"/>
    <property type="match status" value="1"/>
</dbReference>
<dbReference type="PROSITE" id="PS00055">
    <property type="entry name" value="RIBOSOMAL_S12"/>
    <property type="match status" value="1"/>
</dbReference>
<organism>
    <name type="scientific">Lumbricus rubellus</name>
    <name type="common">Humus earthworm</name>
    <dbReference type="NCBI Taxonomy" id="35632"/>
    <lineage>
        <taxon>Eukaryota</taxon>
        <taxon>Metazoa</taxon>
        <taxon>Spiralia</taxon>
        <taxon>Lophotrochozoa</taxon>
        <taxon>Annelida</taxon>
        <taxon>Clitellata</taxon>
        <taxon>Oligochaeta</taxon>
        <taxon>Crassiclitellata</taxon>
        <taxon>Lumbricina</taxon>
        <taxon>Lumbricidae</taxon>
        <taxon>Lumbricinae</taxon>
        <taxon>Lumbricus</taxon>
    </lineage>
</organism>
<name>RS23_LUMRU</name>
<accession>Q9GRJ3</accession>
<proteinExistence type="evidence at transcript level"/>
<feature type="chain" id="PRO_0000146468" description="Small ribosomal subunit protein uS12">
    <location>
        <begin position="1"/>
        <end position="143"/>
    </location>
</feature>
<feature type="region of interest" description="Disordered" evidence="4">
    <location>
        <begin position="1"/>
        <end position="28"/>
    </location>
</feature>
<feature type="compositionally biased region" description="Basic residues" evidence="4">
    <location>
        <begin position="1"/>
        <end position="20"/>
    </location>
</feature>
<feature type="modified residue" description="Hydroxyproline" evidence="1">
    <location>
        <position position="62"/>
    </location>
</feature>
<comment type="subunit">
    <text evidence="3">Component of the 40S small ribosomal subunit.</text>
</comment>
<comment type="subcellular location">
    <subcellularLocation>
        <location evidence="2">Cytoplasm</location>
        <location evidence="2">Cytosol</location>
    </subcellularLocation>
    <subcellularLocation>
        <location evidence="2">Cytoplasm</location>
    </subcellularLocation>
    <subcellularLocation>
        <location evidence="3">Rough endoplasmic reticulum</location>
    </subcellularLocation>
    <text evidence="2 3">Detected on cytosolic polysomes (By similarity). Detected in ribosomes that are associated with the rough endoplasmic reticulum (By similarity).</text>
</comment>
<comment type="similarity">
    <text evidence="5">Belongs to the universal ribosomal protein uS12 family.</text>
</comment>
<protein>
    <recommendedName>
        <fullName evidence="5">Small ribosomal subunit protein uS12</fullName>
    </recommendedName>
    <alternativeName>
        <fullName>40S ribosomal protein S23</fullName>
    </alternativeName>
</protein>
<sequence length="143" mass="16106">MGKPRGLRTARKLKNHRREQRWHDKDYKKSHLGTRWKSNPFGGASHAKGIVLEKVGVEAKQPNSAIRKCVRVQLIKNGKKITAFVPRDGCLNFIEENDEVLVAGFGRKGHAVGDIPGVRFKVVKVASVSLLALYKQKKERPRS</sequence>